<accession>Q8YAB3</accession>
<sequence>MSETKRVRVRYAPSPTGFLHIGNARTALFNYLFARHNDGDFIIRIEDTDAKRNIADGEESQMTNLKWLGMDWDEGVDVPGKYGPYRQSERQSIYEPLIQELLDKDLAYKCYCTEEELDAEREKQKANGEMPRYSGKCRHLTKEQQAEKEAQGFKPSIRFKVPANETITFNDMVKDDVSFESNGIGDFVIAKKDGIPTYNFAVAVDDHLMEISHVLRGDDHISNTPKQILIYNAFGWEPPIFGHMTLIVNESRRKLSKRDGSIIQFIEQYRDLGYLPEALFNFIAMLGWSPEGEEEIFSKEEFIKMFDPKRLSKSPALFDNVKLTWVNNQYVKKLPLNDVVELSLPHLQKAGVVSAELNQAELDWVHKLVSLYHEQMSYGAEIVPLSEMFFADAESITFDEEETAVLAEETVPTVISAFKKELEALEVLEAAEVKAAIKRVQKETGVKGKGLFMPIRIVTTGEMHGPELPLAIEVLGREKVLNRLDTWLKNN</sequence>
<evidence type="ECO:0000255" key="1">
    <source>
        <dbReference type="HAMAP-Rule" id="MF_00022"/>
    </source>
</evidence>
<dbReference type="EC" id="6.1.1.17" evidence="1"/>
<dbReference type="EMBL" id="AL591974">
    <property type="protein sequence ID" value="CAD00764.1"/>
    <property type="molecule type" value="Genomic_DNA"/>
</dbReference>
<dbReference type="PIR" id="AF1104">
    <property type="entry name" value="AF1104"/>
</dbReference>
<dbReference type="RefSeq" id="NP_463768.1">
    <property type="nucleotide sequence ID" value="NC_003210.1"/>
</dbReference>
<dbReference type="RefSeq" id="WP_003732826.1">
    <property type="nucleotide sequence ID" value="NZ_CP149495.1"/>
</dbReference>
<dbReference type="SMR" id="Q8YAB3"/>
<dbReference type="STRING" id="169963.gene:17592888"/>
<dbReference type="PaxDb" id="169963-lmo0237"/>
<dbReference type="EnsemblBacteria" id="CAD00764">
    <property type="protein sequence ID" value="CAD00764"/>
    <property type="gene ID" value="CAD00764"/>
</dbReference>
<dbReference type="GeneID" id="987229"/>
<dbReference type="KEGG" id="lmo:lmo0237"/>
<dbReference type="PATRIC" id="fig|169963.11.peg.245"/>
<dbReference type="eggNOG" id="COG0008">
    <property type="taxonomic scope" value="Bacteria"/>
</dbReference>
<dbReference type="HOGENOM" id="CLU_015768_6_1_9"/>
<dbReference type="OrthoDB" id="9807503at2"/>
<dbReference type="PhylomeDB" id="Q8YAB3"/>
<dbReference type="BioCyc" id="LMON169963:LMO0237-MONOMER"/>
<dbReference type="Proteomes" id="UP000000817">
    <property type="component" value="Chromosome"/>
</dbReference>
<dbReference type="GO" id="GO:0005829">
    <property type="term" value="C:cytosol"/>
    <property type="evidence" value="ECO:0000318"/>
    <property type="project" value="GO_Central"/>
</dbReference>
<dbReference type="GO" id="GO:0005524">
    <property type="term" value="F:ATP binding"/>
    <property type="evidence" value="ECO:0007669"/>
    <property type="project" value="UniProtKB-UniRule"/>
</dbReference>
<dbReference type="GO" id="GO:0004818">
    <property type="term" value="F:glutamate-tRNA ligase activity"/>
    <property type="evidence" value="ECO:0000318"/>
    <property type="project" value="GO_Central"/>
</dbReference>
<dbReference type="GO" id="GO:0000049">
    <property type="term" value="F:tRNA binding"/>
    <property type="evidence" value="ECO:0007669"/>
    <property type="project" value="InterPro"/>
</dbReference>
<dbReference type="GO" id="GO:0008270">
    <property type="term" value="F:zinc ion binding"/>
    <property type="evidence" value="ECO:0007669"/>
    <property type="project" value="UniProtKB-UniRule"/>
</dbReference>
<dbReference type="GO" id="GO:0006424">
    <property type="term" value="P:glutamyl-tRNA aminoacylation"/>
    <property type="evidence" value="ECO:0000318"/>
    <property type="project" value="GO_Central"/>
</dbReference>
<dbReference type="CDD" id="cd00808">
    <property type="entry name" value="GluRS_core"/>
    <property type="match status" value="1"/>
</dbReference>
<dbReference type="FunFam" id="1.10.10.350:FF:000002">
    <property type="entry name" value="Glutamate--tRNA ligase"/>
    <property type="match status" value="1"/>
</dbReference>
<dbReference type="FunFam" id="3.40.50.620:FF:000007">
    <property type="entry name" value="Glutamate--tRNA ligase"/>
    <property type="match status" value="1"/>
</dbReference>
<dbReference type="Gene3D" id="1.10.10.350">
    <property type="match status" value="1"/>
</dbReference>
<dbReference type="Gene3D" id="3.40.50.620">
    <property type="entry name" value="HUPs"/>
    <property type="match status" value="1"/>
</dbReference>
<dbReference type="HAMAP" id="MF_00022">
    <property type="entry name" value="Glu_tRNA_synth_type1"/>
    <property type="match status" value="1"/>
</dbReference>
<dbReference type="InterPro" id="IPR045462">
    <property type="entry name" value="aa-tRNA-synth_I_cd-bd"/>
</dbReference>
<dbReference type="InterPro" id="IPR020751">
    <property type="entry name" value="aa-tRNA-synth_I_codon-bd_sub2"/>
</dbReference>
<dbReference type="InterPro" id="IPR001412">
    <property type="entry name" value="aa-tRNA-synth_I_CS"/>
</dbReference>
<dbReference type="InterPro" id="IPR008925">
    <property type="entry name" value="aa_tRNA-synth_I_cd-bd_sf"/>
</dbReference>
<dbReference type="InterPro" id="IPR004527">
    <property type="entry name" value="Glu-tRNA-ligase_bac/mito"/>
</dbReference>
<dbReference type="InterPro" id="IPR000924">
    <property type="entry name" value="Glu/Gln-tRNA-synth"/>
</dbReference>
<dbReference type="InterPro" id="IPR020058">
    <property type="entry name" value="Glu/Gln-tRNA-synth_Ib_cat-dom"/>
</dbReference>
<dbReference type="InterPro" id="IPR049940">
    <property type="entry name" value="GluQ/Sye"/>
</dbReference>
<dbReference type="InterPro" id="IPR033910">
    <property type="entry name" value="GluRS_core"/>
</dbReference>
<dbReference type="InterPro" id="IPR014729">
    <property type="entry name" value="Rossmann-like_a/b/a_fold"/>
</dbReference>
<dbReference type="NCBIfam" id="TIGR00464">
    <property type="entry name" value="gltX_bact"/>
    <property type="match status" value="1"/>
</dbReference>
<dbReference type="PANTHER" id="PTHR43311">
    <property type="entry name" value="GLUTAMATE--TRNA LIGASE"/>
    <property type="match status" value="1"/>
</dbReference>
<dbReference type="PANTHER" id="PTHR43311:SF2">
    <property type="entry name" value="GLUTAMATE--TRNA LIGASE, MITOCHONDRIAL-RELATED"/>
    <property type="match status" value="1"/>
</dbReference>
<dbReference type="Pfam" id="PF19269">
    <property type="entry name" value="Anticodon_2"/>
    <property type="match status" value="1"/>
</dbReference>
<dbReference type="Pfam" id="PF00749">
    <property type="entry name" value="tRNA-synt_1c"/>
    <property type="match status" value="1"/>
</dbReference>
<dbReference type="PRINTS" id="PR00987">
    <property type="entry name" value="TRNASYNTHGLU"/>
</dbReference>
<dbReference type="SUPFAM" id="SSF48163">
    <property type="entry name" value="An anticodon-binding domain of class I aminoacyl-tRNA synthetases"/>
    <property type="match status" value="1"/>
</dbReference>
<dbReference type="SUPFAM" id="SSF52374">
    <property type="entry name" value="Nucleotidylyl transferase"/>
    <property type="match status" value="1"/>
</dbReference>
<dbReference type="PROSITE" id="PS00178">
    <property type="entry name" value="AA_TRNA_LIGASE_I"/>
    <property type="match status" value="1"/>
</dbReference>
<gene>
    <name evidence="1" type="primary">gltX</name>
    <name type="ordered locus">lmo0237</name>
</gene>
<proteinExistence type="inferred from homology"/>
<name>SYE_LISMO</name>
<reference key="1">
    <citation type="journal article" date="2001" name="Science">
        <title>Comparative genomics of Listeria species.</title>
        <authorList>
            <person name="Glaser P."/>
            <person name="Frangeul L."/>
            <person name="Buchrieser C."/>
            <person name="Rusniok C."/>
            <person name="Amend A."/>
            <person name="Baquero F."/>
            <person name="Berche P."/>
            <person name="Bloecker H."/>
            <person name="Brandt P."/>
            <person name="Chakraborty T."/>
            <person name="Charbit A."/>
            <person name="Chetouani F."/>
            <person name="Couve E."/>
            <person name="de Daruvar A."/>
            <person name="Dehoux P."/>
            <person name="Domann E."/>
            <person name="Dominguez-Bernal G."/>
            <person name="Duchaud E."/>
            <person name="Durant L."/>
            <person name="Dussurget O."/>
            <person name="Entian K.-D."/>
            <person name="Fsihi H."/>
            <person name="Garcia-del Portillo F."/>
            <person name="Garrido P."/>
            <person name="Gautier L."/>
            <person name="Goebel W."/>
            <person name="Gomez-Lopez N."/>
            <person name="Hain T."/>
            <person name="Hauf J."/>
            <person name="Jackson D."/>
            <person name="Jones L.-M."/>
            <person name="Kaerst U."/>
            <person name="Kreft J."/>
            <person name="Kuhn M."/>
            <person name="Kunst F."/>
            <person name="Kurapkat G."/>
            <person name="Madueno E."/>
            <person name="Maitournam A."/>
            <person name="Mata Vicente J."/>
            <person name="Ng E."/>
            <person name="Nedjari H."/>
            <person name="Nordsiek G."/>
            <person name="Novella S."/>
            <person name="de Pablos B."/>
            <person name="Perez-Diaz J.-C."/>
            <person name="Purcell R."/>
            <person name="Remmel B."/>
            <person name="Rose M."/>
            <person name="Schlueter T."/>
            <person name="Simoes N."/>
            <person name="Tierrez A."/>
            <person name="Vazquez-Boland J.-A."/>
            <person name="Voss H."/>
            <person name="Wehland J."/>
            <person name="Cossart P."/>
        </authorList>
    </citation>
    <scope>NUCLEOTIDE SEQUENCE [LARGE SCALE GENOMIC DNA]</scope>
    <source>
        <strain>ATCC BAA-679 / EGD-e</strain>
    </source>
</reference>
<organism>
    <name type="scientific">Listeria monocytogenes serovar 1/2a (strain ATCC BAA-679 / EGD-e)</name>
    <dbReference type="NCBI Taxonomy" id="169963"/>
    <lineage>
        <taxon>Bacteria</taxon>
        <taxon>Bacillati</taxon>
        <taxon>Bacillota</taxon>
        <taxon>Bacilli</taxon>
        <taxon>Bacillales</taxon>
        <taxon>Listeriaceae</taxon>
        <taxon>Listeria</taxon>
    </lineage>
</organism>
<protein>
    <recommendedName>
        <fullName evidence="1">Glutamate--tRNA ligase</fullName>
        <ecNumber evidence="1">6.1.1.17</ecNumber>
    </recommendedName>
    <alternativeName>
        <fullName evidence="1">Glutamyl-tRNA synthetase</fullName>
        <shortName evidence="1">GluRS</shortName>
    </alternativeName>
</protein>
<comment type="function">
    <text evidence="1">Catalyzes the attachment of glutamate to tRNA(Glu) in a two-step reaction: glutamate is first activated by ATP to form Glu-AMP and then transferred to the acceptor end of tRNA(Glu).</text>
</comment>
<comment type="catalytic activity">
    <reaction evidence="1">
        <text>tRNA(Glu) + L-glutamate + ATP = L-glutamyl-tRNA(Glu) + AMP + diphosphate</text>
        <dbReference type="Rhea" id="RHEA:23540"/>
        <dbReference type="Rhea" id="RHEA-COMP:9663"/>
        <dbReference type="Rhea" id="RHEA-COMP:9680"/>
        <dbReference type="ChEBI" id="CHEBI:29985"/>
        <dbReference type="ChEBI" id="CHEBI:30616"/>
        <dbReference type="ChEBI" id="CHEBI:33019"/>
        <dbReference type="ChEBI" id="CHEBI:78442"/>
        <dbReference type="ChEBI" id="CHEBI:78520"/>
        <dbReference type="ChEBI" id="CHEBI:456215"/>
        <dbReference type="EC" id="6.1.1.17"/>
    </reaction>
</comment>
<comment type="cofactor">
    <cofactor evidence="1">
        <name>Zn(2+)</name>
        <dbReference type="ChEBI" id="CHEBI:29105"/>
    </cofactor>
    <text evidence="1">Binds 1 zinc ion per subunit.</text>
</comment>
<comment type="subunit">
    <text evidence="1">Monomer.</text>
</comment>
<comment type="subcellular location">
    <subcellularLocation>
        <location evidence="1">Cytoplasm</location>
    </subcellularLocation>
</comment>
<comment type="similarity">
    <text evidence="1">Belongs to the class-I aminoacyl-tRNA synthetase family. Glutamate--tRNA ligase type 1 subfamily.</text>
</comment>
<keyword id="KW-0030">Aminoacyl-tRNA synthetase</keyword>
<keyword id="KW-0067">ATP-binding</keyword>
<keyword id="KW-0963">Cytoplasm</keyword>
<keyword id="KW-0436">Ligase</keyword>
<keyword id="KW-0479">Metal-binding</keyword>
<keyword id="KW-0547">Nucleotide-binding</keyword>
<keyword id="KW-0648">Protein biosynthesis</keyword>
<keyword id="KW-1185">Reference proteome</keyword>
<keyword id="KW-0862">Zinc</keyword>
<feature type="chain" id="PRO_0000119594" description="Glutamate--tRNA ligase">
    <location>
        <begin position="1"/>
        <end position="491"/>
    </location>
</feature>
<feature type="short sequence motif" description="'HIGH' region" evidence="1">
    <location>
        <begin position="13"/>
        <end position="23"/>
    </location>
</feature>
<feature type="short sequence motif" description="'KMSKS' region" evidence="1">
    <location>
        <begin position="254"/>
        <end position="258"/>
    </location>
</feature>
<feature type="binding site" evidence="1">
    <location>
        <position position="110"/>
    </location>
    <ligand>
        <name>Zn(2+)</name>
        <dbReference type="ChEBI" id="CHEBI:29105"/>
    </ligand>
</feature>
<feature type="binding site" evidence="1">
    <location>
        <position position="112"/>
    </location>
    <ligand>
        <name>Zn(2+)</name>
        <dbReference type="ChEBI" id="CHEBI:29105"/>
    </ligand>
</feature>
<feature type="binding site" evidence="1">
    <location>
        <position position="137"/>
    </location>
    <ligand>
        <name>Zn(2+)</name>
        <dbReference type="ChEBI" id="CHEBI:29105"/>
    </ligand>
</feature>
<feature type="binding site" evidence="1">
    <location>
        <position position="139"/>
    </location>
    <ligand>
        <name>Zn(2+)</name>
        <dbReference type="ChEBI" id="CHEBI:29105"/>
    </ligand>
</feature>
<feature type="binding site" evidence="1">
    <location>
        <position position="257"/>
    </location>
    <ligand>
        <name>ATP</name>
        <dbReference type="ChEBI" id="CHEBI:30616"/>
    </ligand>
</feature>